<feature type="chain" id="PRO_0000249541" description="N-terminal kinase-like protein">
    <location>
        <begin position="1"/>
        <end position="808"/>
    </location>
</feature>
<feature type="domain" description="Protein kinase" evidence="3">
    <location>
        <begin position="14"/>
        <end position="314"/>
    </location>
</feature>
<feature type="repeat" description="HEAT 1">
    <location>
        <begin position="350"/>
        <end position="388"/>
    </location>
</feature>
<feature type="repeat" description="HEAT 2">
    <location>
        <begin position="389"/>
        <end position="427"/>
    </location>
</feature>
<feature type="repeat" description="HEAT 3">
    <location>
        <begin position="507"/>
        <end position="545"/>
    </location>
</feature>
<feature type="region of interest" description="Disordered" evidence="4">
    <location>
        <begin position="540"/>
        <end position="566"/>
    </location>
</feature>
<feature type="region of interest" description="Disordered" evidence="4">
    <location>
        <begin position="587"/>
        <end position="646"/>
    </location>
</feature>
<feature type="region of interest" description="Disordered" evidence="4">
    <location>
        <begin position="658"/>
        <end position="808"/>
    </location>
</feature>
<feature type="region of interest" description="Interaction with COPB1" evidence="1">
    <location>
        <begin position="793"/>
        <end position="808"/>
    </location>
</feature>
<feature type="coiled-coil region" evidence="2">
    <location>
        <begin position="761"/>
        <end position="797"/>
    </location>
</feature>
<feature type="compositionally biased region" description="Low complexity" evidence="4">
    <location>
        <begin position="556"/>
        <end position="566"/>
    </location>
</feature>
<feature type="compositionally biased region" description="Polar residues" evidence="4">
    <location>
        <begin position="587"/>
        <end position="600"/>
    </location>
</feature>
<feature type="compositionally biased region" description="Pro residues" evidence="4">
    <location>
        <begin position="601"/>
        <end position="617"/>
    </location>
</feature>
<feature type="compositionally biased region" description="Polar residues" evidence="4">
    <location>
        <begin position="660"/>
        <end position="680"/>
    </location>
</feature>
<feature type="compositionally biased region" description="Basic and acidic residues" evidence="4">
    <location>
        <begin position="681"/>
        <end position="690"/>
    </location>
</feature>
<feature type="compositionally biased region" description="Acidic residues" evidence="4">
    <location>
        <begin position="755"/>
        <end position="764"/>
    </location>
</feature>
<feature type="compositionally biased region" description="Basic and acidic residues" evidence="4">
    <location>
        <begin position="765"/>
        <end position="775"/>
    </location>
</feature>
<feature type="compositionally biased region" description="Basic and acidic residues" evidence="4">
    <location>
        <begin position="782"/>
        <end position="795"/>
    </location>
</feature>
<feature type="modified residue" description="Phosphoserine" evidence="17 18">
    <location>
        <position position="754"/>
    </location>
</feature>
<feature type="splice variant" id="VSP_020503" description="In isoform 5." evidence="15">
    <original>TPEGVPAPAPTPVPATPTTSGHWE</original>
    <variation>SRPARRPLGDAGGGQGHSRGQQHC</variation>
    <location>
        <begin position="603"/>
        <end position="626"/>
    </location>
</feature>
<feature type="splice variant" id="VSP_020504" description="In isoform 2 and isoform 3." evidence="12">
    <location>
        <begin position="606"/>
        <end position="622"/>
    </location>
</feature>
<feature type="splice variant" id="VSP_020505" description="In isoform 5." evidence="15">
    <location>
        <begin position="627"/>
        <end position="808"/>
    </location>
</feature>
<feature type="splice variant" id="VSP_020506" description="In isoform 3." evidence="12">
    <location>
        <begin position="628"/>
        <end position="711"/>
    </location>
</feature>
<feature type="splice variant" id="VSP_020507" description="In isoform 6." evidence="14">
    <original>VSNSDHKSSKSPESDWSSWEAEGSWEQGWQEPSSQEPPPDGTRLASEYNWGGPESSDKGDPFATLSARPSTQPRPDSWGEDNWEGLETDSRQVKAELARKKREERRREMEAKRAERKVAKGPMKLGARKLD</original>
    <variation>SPTGAAGKLRAPGNRAGRSQAPRSHLLTVHGWPASITGVAQSPATRATPSLPCLHVPAPSRGQTLGVRTTGRASRLTVDRSRLSWPGRSARSGGGRWRPNAPRGRWPRAP</variation>
    <location>
        <begin position="678"/>
        <end position="808"/>
    </location>
</feature>
<feature type="splice variant" id="VSP_020508" description="In isoform 4." evidence="13">
    <original>PRPDSWGEDNWEGLETDSRQVKAELARKKREERRREMEAKRAERKVAKGPMKLGARKLD</original>
    <variation>DRSRLSWPGRSARSGGGRWRPNAPRGRWPRAP</variation>
    <location>
        <begin position="750"/>
        <end position="808"/>
    </location>
</feature>
<feature type="sequence variant" id="VAR_041364" description="In dbSNP:rs55977709." evidence="9">
    <original>P</original>
    <variation>L</variation>
    <location>
        <position position="479"/>
    </location>
</feature>
<feature type="sequence variant" id="VAR_041365" description="In a metastatic melanoma sample; somatic mutation." evidence="9">
    <original>H</original>
    <variation>Y</variation>
    <location>
        <position position="495"/>
    </location>
</feature>
<feature type="sequence variant" id="VAR_041366" description="In dbSNP:rs56076708." evidence="9">
    <original>Q</original>
    <variation>H</variation>
    <location>
        <position position="663"/>
    </location>
</feature>
<feature type="sequence variant" id="VAR_041367" description="In dbSNP:rs56077405." evidence="9">
    <original>W</original>
    <variation>S</variation>
    <location>
        <position position="755"/>
    </location>
</feature>
<feature type="sequence conflict" description="In Ref. 2; AAG17902." evidence="16" ref="2">
    <original>GN</original>
    <variation>AT</variation>
    <location>
        <begin position="168"/>
        <end position="169"/>
    </location>
</feature>
<feature type="sequence conflict" description="In Ref. 7; AAG09726." evidence="16" ref="7">
    <original>I</original>
    <variation>F</variation>
    <location>
        <position position="530"/>
    </location>
</feature>
<feature type="sequence conflict" description="In Ref. 7; AAG09726." evidence="16" ref="7">
    <original>V</original>
    <variation>W</variation>
    <location>
        <position position="574"/>
    </location>
</feature>
<keyword id="KW-0010">Activator</keyword>
<keyword id="KW-0025">Alternative splicing</keyword>
<keyword id="KW-0175">Coiled coil</keyword>
<keyword id="KW-0963">Cytoplasm</keyword>
<keyword id="KW-0206">Cytoskeleton</keyword>
<keyword id="KW-0238">DNA-binding</keyword>
<keyword id="KW-0931">ER-Golgi transport</keyword>
<keyword id="KW-0333">Golgi apparatus</keyword>
<keyword id="KW-0991">Intellectual disability</keyword>
<keyword id="KW-0523">Neurodegeneration</keyword>
<keyword id="KW-0539">Nucleus</keyword>
<keyword id="KW-0597">Phosphoprotein</keyword>
<keyword id="KW-1267">Proteomics identification</keyword>
<keyword id="KW-1185">Reference proteome</keyword>
<keyword id="KW-0677">Repeat</keyword>
<keyword id="KW-0950">Spinocerebellar ataxia</keyword>
<keyword id="KW-0804">Transcription</keyword>
<keyword id="KW-0805">Transcription regulation</keyword>
<keyword id="KW-0813">Transport</keyword>
<sequence length="808" mass="89631">MWFFARDPVRDFPFELIPEPPEGGLPGPWALHRGRKKATGSPVSIFVYDVKPGAEEQTQVAKAAFKRFKTLRHPNILAYIDGLETEKCLHVVTEAVTPLGIYLKARVEAGGLKELEISWGLHQIVKALSFLVNDCSLIHNNVCMAAVFVDRAGEWKLGGLDYMYSAQGNGGGPPRKGIPELEQYDPPELADSSGRVVREKWSADMWRLGCLIWEVFNGPLPRAAALRNPGKIPKTLVPHYCELVGANPKVRPNPARFLQNCRAPGGFMSNRFVETNLFLEEIQIKEPAEKQKFFQELSKSLDAFPEDFCRHKVLPQLLTAFEFGNAGAVVLTPLFKVGKFLSAEEYQQKIIPVVVKMFSSTDRAMRIRLLQQMEQFIQYLDEPTVNTQIFPHVVHGFLDTNPAIREQTVKSMLLLAPKLNEANLNVELMKHFARLQAKDEQGPIRCNTTVCLGKIGSYLSASTRHRVLTSAFSRATRDPFAPSRVAGVLGFAATHNLYSMNDCAQKILPVLCGLTVDPEKSVRDQAFKAIRSFLSKLESVSEDPTQLEEVEKDVHAASSPGMGGAAASWAGWAVTGVSSLTSKLIRSHPTTAPTETNIPQRPTPEGVPAPAPTPVPATPTTSGHWETQEEDKDTAEDSSTADRWDDEDWGSLEQEAESVLAQQDDWSTGGQVSRASQVSNSDHKSSKSPESDWSSWEAEGSWEQGWQEPSSQEPPPDGTRLASEYNWGGPESSDKGDPFATLSARPSTQPRPDSWGEDNWEGLETDSRQVKAELARKKREERRREMEAKRAERKVAKGPMKLGARKLD</sequence>
<comment type="function">
    <text evidence="10 11">Regulates COPI-mediated retrograde protein traffic at the interface between the Golgi apparatus and the endoplasmic reticulum (PubMed:18556652). Involved in the maintenance of the Golgi apparatus morphology (PubMed:26581903).</text>
</comment>
<comment type="function">
    <molecule>Isoform 6</molecule>
    <text evidence="7">Acts as a transcriptional activator. It binds to three different types of GC-rich DNA binding sites (box-A, -B and -C) in the beta-polymerase promoter region. It also binds to the TERT promoter region.</text>
</comment>
<comment type="subunit">
    <text evidence="1 5 8">Interacts with GORAB. Interacts with COPA, COPB1 and COPB2 (By similarity). Homooligomer. Interacts with AP2B1.</text>
</comment>
<comment type="interaction">
    <interactant intactId="EBI-949287">
        <id>Q96KG9</id>
    </interactant>
    <interactant intactId="EBI-1767898">
        <id>O94979</id>
        <label>SEC31A</label>
    </interactant>
    <organismsDiffer>false</organismsDiffer>
    <experiments>5</experiments>
</comment>
<comment type="interaction">
    <interactant intactId="EBI-12023020">
        <id>Q96KG9-4</id>
    </interactant>
    <interactant intactId="EBI-16429430">
        <id>A0A0S2Z4M1</id>
        <label>AXIN1</label>
    </interactant>
    <organismsDiffer>false</organismsDiffer>
    <experiments>3</experiments>
</comment>
<comment type="interaction">
    <interactant intactId="EBI-12023020">
        <id>Q96KG9-4</id>
    </interactant>
    <interactant intactId="EBI-710484">
        <id>O15169</id>
        <label>AXIN1</label>
    </interactant>
    <organismsDiffer>false</organismsDiffer>
    <experiments>3</experiments>
</comment>
<comment type="interaction">
    <interactant intactId="EBI-12023020">
        <id>Q96KG9-4</id>
    </interactant>
    <interactant intactId="EBI-351257">
        <id>P26196</id>
        <label>DDX6</label>
    </interactant>
    <organismsDiffer>false</organismsDiffer>
    <experiments>5</experiments>
</comment>
<comment type="interaction">
    <interactant intactId="EBI-12023020">
        <id>Q96KG9-4</id>
    </interactant>
    <interactant intactId="EBI-726510">
        <id>Q96BZ8</id>
        <label>LENG1</label>
    </interactant>
    <organismsDiffer>false</organismsDiffer>
    <experiments>3</experiments>
</comment>
<comment type="interaction">
    <interactant intactId="EBI-12023020">
        <id>Q96KG9-4</id>
    </interactant>
    <interactant intactId="EBI-714158">
        <id>Q13526</id>
        <label>PIN1</label>
    </interactant>
    <organismsDiffer>false</organismsDiffer>
    <experiments>3</experiments>
</comment>
<comment type="interaction">
    <interactant intactId="EBI-12023020">
        <id>Q96KG9-4</id>
    </interactant>
    <interactant intactId="EBI-742388">
        <id>Q9H8W4</id>
        <label>PLEKHF2</label>
    </interactant>
    <organismsDiffer>false</organismsDiffer>
    <experiments>3</experiments>
</comment>
<comment type="interaction">
    <interactant intactId="EBI-12023020">
        <id>Q96KG9-4</id>
    </interactant>
    <interactant intactId="EBI-710310">
        <id>Q15560</id>
        <label>TCEA2</label>
    </interactant>
    <organismsDiffer>false</organismsDiffer>
    <experiments>3</experiments>
</comment>
<comment type="subcellular location">
    <subcellularLocation>
        <location evidence="10">Cytoplasm</location>
        <location evidence="10">Cytoskeleton</location>
        <location evidence="10">Microtubule organizing center</location>
        <location evidence="10">Centrosome</location>
    </subcellularLocation>
    <subcellularLocation>
        <location evidence="10">Endoplasmic reticulum-Golgi intermediate compartment</location>
    </subcellularLocation>
    <subcellularLocation>
        <location evidence="10">Golgi apparatus</location>
        <location evidence="10">cis-Golgi network</location>
    </subcellularLocation>
    <text>Localized to the Endoplasmic reticulum-Golgi intermediate and cis-Golgi in an ARF1-independent manner.</text>
</comment>
<comment type="subcellular location">
    <molecule>Isoform 1</molecule>
    <subcellularLocation>
        <location>Cytoplasm</location>
    </subcellularLocation>
    <text>Cytoplasmic throughout the cell cycle.</text>
</comment>
<comment type="subcellular location">
    <molecule>Isoform 2</molecule>
    <subcellularLocation>
        <location>Cytoplasm</location>
    </subcellularLocation>
    <text>Cytoplasmic throughout the cell cycle.</text>
</comment>
<comment type="subcellular location">
    <molecule>Isoform 3</molecule>
    <subcellularLocation>
        <location>Cytoplasm</location>
    </subcellularLocation>
    <subcellularLocation>
        <location>Cytoplasm</location>
        <location>Cytoskeleton</location>
        <location>Microtubule organizing center</location>
        <location>Centrosome</location>
    </subcellularLocation>
    <text>Cytoplasmic during interphase and centrosomal during mitosis, it localizes to the centrosomes in a microtubule-independent manner.</text>
</comment>
<comment type="subcellular location">
    <molecule>Isoform 6</molecule>
    <subcellularLocation>
        <location evidence="6">Nucleus</location>
    </subcellularLocation>
</comment>
<comment type="alternative products">
    <event type="alternative splicing"/>
    <isoform>
        <id>Q96KG9-1</id>
        <name>1</name>
        <sequence type="displayed"/>
    </isoform>
    <isoform>
        <id>Q96KG9-2</id>
        <name>2</name>
        <name>Variant 1</name>
        <sequence type="described" ref="VSP_020504"/>
    </isoform>
    <isoform>
        <id>Q96KG9-3</id>
        <name>3</name>
        <name>Variant 2</name>
        <sequence type="described" ref="VSP_020504 VSP_020506"/>
    </isoform>
    <isoform>
        <id>Q96KG9-4</id>
        <name>4</name>
        <sequence type="described" ref="VSP_020508"/>
    </isoform>
    <isoform>
        <id>Q96KG9-5</id>
        <name>5</name>
        <sequence type="described" ref="VSP_020503 VSP_020505"/>
    </isoform>
    <isoform>
        <id>Q96KG9-6</id>
        <name>6</name>
        <sequence type="described" ref="VSP_020507"/>
    </isoform>
</comment>
<comment type="tissue specificity">
    <text evidence="5">Ubiquitous.</text>
</comment>
<comment type="domain">
    <text evidence="3">The protein kinase domain is predicted to be catalytically inactive.</text>
</comment>
<comment type="disease" evidence="11">
    <disease id="DI-04603">
        <name>Spinocerebellar ataxia, autosomal recessive, 21</name>
        <acronym>SCAR21</acronym>
        <description>A form of spinocerebellar ataxia, a clinically and genetically heterogeneous group of cerebellar disorders due to degeneration of the cerebellum with variable involvement of the brainstem and spinal cord. SCAR21 is characterized by cerebellar atrophy and ataxia with onset in early childhood. Patients also manifest recurrent episodes of liver failure, hepatic fibrosis and a peripheral neuropathy.</description>
        <dbReference type="MIM" id="616719"/>
    </disease>
    <text>The disease is caused by variants affecting the gene represented in this entry.</text>
</comment>
<comment type="miscellaneous">
    <molecule>Isoform 3</molecule>
    <text evidence="16">Non-canonical splice junctions.</text>
</comment>
<comment type="similarity">
    <text evidence="16">Belongs to the protein kinase superfamily.</text>
</comment>
<comment type="sequence caution" evidence="16">
    <conflict type="frameshift">
        <sequence resource="EMBL-CDS" id="AAG09726"/>
    </conflict>
</comment>
<comment type="sequence caution" evidence="16">
    <conflict type="frameshift">
        <sequence resource="EMBL-CDS" id="AAG17902"/>
    </conflict>
</comment>
<dbReference type="EMBL" id="AB047077">
    <property type="protein sequence ID" value="BAB55454.1"/>
    <property type="molecule type" value="mRNA"/>
</dbReference>
<dbReference type="EMBL" id="AB051427">
    <property type="protein sequence ID" value="BAB55458.1"/>
    <property type="molecule type" value="mRNA"/>
</dbReference>
<dbReference type="EMBL" id="AB051428">
    <property type="protein sequence ID" value="BAB55459.1"/>
    <property type="molecule type" value="mRNA"/>
</dbReference>
<dbReference type="EMBL" id="AF297709">
    <property type="protein sequence ID" value="AAG17902.1"/>
    <property type="status" value="ALT_FRAME"/>
    <property type="molecule type" value="mRNA"/>
</dbReference>
<dbReference type="EMBL" id="AP000769">
    <property type="status" value="NOT_ANNOTATED_CDS"/>
    <property type="molecule type" value="Genomic_DNA"/>
</dbReference>
<dbReference type="EMBL" id="CH471076">
    <property type="protein sequence ID" value="EAW74399.1"/>
    <property type="molecule type" value="Genomic_DNA"/>
</dbReference>
<dbReference type="EMBL" id="BC009967">
    <property type="protein sequence ID" value="AAH09967.2"/>
    <property type="molecule type" value="mRNA"/>
</dbReference>
<dbReference type="EMBL" id="BC069233">
    <property type="protein sequence ID" value="AAH69233.1"/>
    <property type="molecule type" value="mRNA"/>
</dbReference>
<dbReference type="EMBL" id="AF255613">
    <property type="protein sequence ID" value="AAF81422.1"/>
    <property type="molecule type" value="Genomic_DNA"/>
</dbReference>
<dbReference type="EMBL" id="AF225424">
    <property type="protein sequence ID" value="AAG09726.1"/>
    <property type="status" value="ALT_FRAME"/>
    <property type="molecule type" value="mRNA"/>
</dbReference>
<dbReference type="CCDS" id="CCDS41672.1">
    <molecule id="Q96KG9-1"/>
</dbReference>
<dbReference type="CCDS" id="CCDS44646.1">
    <molecule id="Q96KG9-2"/>
</dbReference>
<dbReference type="RefSeq" id="NP_001041683.1">
    <molecule id="Q96KG9-2"/>
    <property type="nucleotide sequence ID" value="NM_001048218.2"/>
</dbReference>
<dbReference type="RefSeq" id="NP_001412114.1">
    <molecule id="Q96KG9-6"/>
    <property type="nucleotide sequence ID" value="NM_001425185.1"/>
</dbReference>
<dbReference type="RefSeq" id="NP_001412117.1">
    <molecule id="Q96KG9-4"/>
    <property type="nucleotide sequence ID" value="NM_001425188.1"/>
</dbReference>
<dbReference type="RefSeq" id="NP_065731.3">
    <molecule id="Q96KG9-1"/>
    <property type="nucleotide sequence ID" value="NM_020680.3"/>
</dbReference>
<dbReference type="RefSeq" id="XP_005274177.1">
    <property type="nucleotide sequence ID" value="XM_005274120.3"/>
</dbReference>
<dbReference type="SMR" id="Q96KG9"/>
<dbReference type="BioGRID" id="121512">
    <property type="interactions" value="188"/>
</dbReference>
<dbReference type="CORUM" id="Q96KG9"/>
<dbReference type="FunCoup" id="Q96KG9">
    <property type="interactions" value="4168"/>
</dbReference>
<dbReference type="IntAct" id="Q96KG9">
    <property type="interactions" value="108"/>
</dbReference>
<dbReference type="MINT" id="Q96KG9"/>
<dbReference type="STRING" id="9606.ENSP00000270176"/>
<dbReference type="DrugBank" id="DB05036">
    <property type="generic name" value="Grn163l"/>
</dbReference>
<dbReference type="GlyGen" id="Q96KG9">
    <property type="glycosylation" value="2 sites, 1 O-linked glycan (1 site)"/>
</dbReference>
<dbReference type="iPTMnet" id="Q96KG9"/>
<dbReference type="PhosphoSitePlus" id="Q96KG9"/>
<dbReference type="SwissPalm" id="Q96KG9"/>
<dbReference type="BioMuta" id="SCYL1"/>
<dbReference type="DMDM" id="74762671"/>
<dbReference type="jPOST" id="Q96KG9"/>
<dbReference type="MassIVE" id="Q96KG9"/>
<dbReference type="PaxDb" id="9606-ENSP00000270176"/>
<dbReference type="PeptideAtlas" id="Q96KG9"/>
<dbReference type="ProteomicsDB" id="77069">
    <molecule id="Q96KG9-1"/>
</dbReference>
<dbReference type="ProteomicsDB" id="77070">
    <molecule id="Q96KG9-2"/>
</dbReference>
<dbReference type="ProteomicsDB" id="77071">
    <molecule id="Q96KG9-3"/>
</dbReference>
<dbReference type="ProteomicsDB" id="77072">
    <molecule id="Q96KG9-4"/>
</dbReference>
<dbReference type="ProteomicsDB" id="77073">
    <molecule id="Q96KG9-5"/>
</dbReference>
<dbReference type="ProteomicsDB" id="77074">
    <molecule id="Q96KG9-6"/>
</dbReference>
<dbReference type="Pumba" id="Q96KG9"/>
<dbReference type="Antibodypedia" id="7388">
    <property type="antibodies" value="170 antibodies from 26 providers"/>
</dbReference>
<dbReference type="DNASU" id="57410"/>
<dbReference type="Ensembl" id="ENST00000270176.10">
    <molecule id="Q96KG9-1"/>
    <property type="protein sequence ID" value="ENSP00000270176.5"/>
    <property type="gene ID" value="ENSG00000142186.18"/>
</dbReference>
<dbReference type="Ensembl" id="ENST00000420247.6">
    <molecule id="Q96KG9-2"/>
    <property type="protein sequence ID" value="ENSP00000408192.2"/>
    <property type="gene ID" value="ENSG00000142186.18"/>
</dbReference>
<dbReference type="Ensembl" id="ENST00000533862.5">
    <molecule id="Q96KG9-6"/>
    <property type="protein sequence ID" value="ENSP00000437254.1"/>
    <property type="gene ID" value="ENSG00000142186.18"/>
</dbReference>
<dbReference type="GeneID" id="57410"/>
<dbReference type="KEGG" id="hsa:57410"/>
<dbReference type="MANE-Select" id="ENST00000270176.10">
    <property type="protein sequence ID" value="ENSP00000270176.5"/>
    <property type="RefSeq nucleotide sequence ID" value="NM_020680.4"/>
    <property type="RefSeq protein sequence ID" value="NP_065731.3"/>
</dbReference>
<dbReference type="UCSC" id="uc001oea.2">
    <molecule id="Q96KG9-1"/>
    <property type="organism name" value="human"/>
</dbReference>
<dbReference type="AGR" id="HGNC:14372"/>
<dbReference type="CTD" id="57410"/>
<dbReference type="DisGeNET" id="57410"/>
<dbReference type="GeneCards" id="SCYL1"/>
<dbReference type="HGNC" id="HGNC:14372">
    <property type="gene designation" value="SCYL1"/>
</dbReference>
<dbReference type="HPA" id="ENSG00000142186">
    <property type="expression patterns" value="Low tissue specificity"/>
</dbReference>
<dbReference type="MalaCards" id="SCYL1"/>
<dbReference type="MIM" id="607982">
    <property type="type" value="gene"/>
</dbReference>
<dbReference type="MIM" id="616719">
    <property type="type" value="phenotype"/>
</dbReference>
<dbReference type="neXtProt" id="NX_Q96KG9"/>
<dbReference type="OpenTargets" id="ENSG00000142186"/>
<dbReference type="Orphanet" id="466794">
    <property type="disease" value="Acute infantile liver failure-cerebellar ataxia-peripheral sensory motor neuropathy syndrome"/>
</dbReference>
<dbReference type="PharmGKB" id="PA31812"/>
<dbReference type="VEuPathDB" id="HostDB:ENSG00000142186"/>
<dbReference type="eggNOG" id="KOG1243">
    <property type="taxonomic scope" value="Eukaryota"/>
</dbReference>
<dbReference type="GeneTree" id="ENSGT00930000151054"/>
<dbReference type="HOGENOM" id="CLU_010392_0_1_1"/>
<dbReference type="InParanoid" id="Q96KG9"/>
<dbReference type="OMA" id="NDTSWAG"/>
<dbReference type="OrthoDB" id="447103at2759"/>
<dbReference type="PAN-GO" id="Q96KG9">
    <property type="GO annotations" value="0 GO annotations based on evolutionary models"/>
</dbReference>
<dbReference type="PhylomeDB" id="Q96KG9"/>
<dbReference type="TreeFam" id="TF313435"/>
<dbReference type="PathwayCommons" id="Q96KG9"/>
<dbReference type="SignaLink" id="Q96KG9"/>
<dbReference type="SIGNOR" id="Q96KG9"/>
<dbReference type="BioGRID-ORCS" id="57410">
    <property type="hits" value="181 hits in 1210 CRISPR screens"/>
</dbReference>
<dbReference type="CD-CODE" id="1A18FFC4">
    <property type="entry name" value="Paraspeckle"/>
</dbReference>
<dbReference type="CD-CODE" id="8C2F96ED">
    <property type="entry name" value="Centrosome"/>
</dbReference>
<dbReference type="ChiTaRS" id="SCYL1">
    <property type="organism name" value="human"/>
</dbReference>
<dbReference type="GeneWiki" id="SCYL1"/>
<dbReference type="GenomeRNAi" id="57410"/>
<dbReference type="Pharos" id="Q96KG9">
    <property type="development level" value="Tbio"/>
</dbReference>
<dbReference type="PRO" id="PR:Q96KG9"/>
<dbReference type="Proteomes" id="UP000005640">
    <property type="component" value="Chromosome 11"/>
</dbReference>
<dbReference type="RNAct" id="Q96KG9">
    <property type="molecule type" value="protein"/>
</dbReference>
<dbReference type="Bgee" id="ENSG00000142186">
    <property type="expression patterns" value="Expressed in apex of heart and 175 other cell types or tissues"/>
</dbReference>
<dbReference type="ExpressionAtlas" id="Q96KG9">
    <property type="expression patterns" value="baseline and differential"/>
</dbReference>
<dbReference type="GO" id="GO:0005813">
    <property type="term" value="C:centrosome"/>
    <property type="evidence" value="ECO:0007669"/>
    <property type="project" value="UniProtKB-SubCell"/>
</dbReference>
<dbReference type="GO" id="GO:0005801">
    <property type="term" value="C:cis-Golgi network"/>
    <property type="evidence" value="ECO:0000314"/>
    <property type="project" value="UniProtKB"/>
</dbReference>
<dbReference type="GO" id="GO:0030126">
    <property type="term" value="C:COPI vesicle coat"/>
    <property type="evidence" value="ECO:0000314"/>
    <property type="project" value="UniProtKB"/>
</dbReference>
<dbReference type="GO" id="GO:0005737">
    <property type="term" value="C:cytoplasm"/>
    <property type="evidence" value="ECO:0000250"/>
    <property type="project" value="HGNC-UCL"/>
</dbReference>
<dbReference type="GO" id="GO:0005829">
    <property type="term" value="C:cytosol"/>
    <property type="evidence" value="ECO:0000314"/>
    <property type="project" value="HPA"/>
</dbReference>
<dbReference type="GO" id="GO:0005793">
    <property type="term" value="C:endoplasmic reticulum-Golgi intermediate compartment"/>
    <property type="evidence" value="ECO:0000314"/>
    <property type="project" value="UniProtKB"/>
</dbReference>
<dbReference type="GO" id="GO:0005794">
    <property type="term" value="C:Golgi apparatus"/>
    <property type="evidence" value="ECO:0000314"/>
    <property type="project" value="UniProtKB"/>
</dbReference>
<dbReference type="GO" id="GO:0016020">
    <property type="term" value="C:membrane"/>
    <property type="evidence" value="ECO:0007005"/>
    <property type="project" value="UniProtKB"/>
</dbReference>
<dbReference type="GO" id="GO:0005634">
    <property type="term" value="C:nucleus"/>
    <property type="evidence" value="ECO:0007669"/>
    <property type="project" value="UniProtKB-SubCell"/>
</dbReference>
<dbReference type="GO" id="GO:0005524">
    <property type="term" value="F:ATP binding"/>
    <property type="evidence" value="ECO:0007669"/>
    <property type="project" value="InterPro"/>
</dbReference>
<dbReference type="GO" id="GO:0045296">
    <property type="term" value="F:cadherin binding"/>
    <property type="evidence" value="ECO:0007005"/>
    <property type="project" value="BHF-UCL"/>
</dbReference>
<dbReference type="GO" id="GO:0003677">
    <property type="term" value="F:DNA binding"/>
    <property type="evidence" value="ECO:0007669"/>
    <property type="project" value="UniProtKB-KW"/>
</dbReference>
<dbReference type="GO" id="GO:0004672">
    <property type="term" value="F:protein kinase activity"/>
    <property type="evidence" value="ECO:0007669"/>
    <property type="project" value="InterPro"/>
</dbReference>
<dbReference type="GO" id="GO:0006954">
    <property type="term" value="P:inflammatory response"/>
    <property type="evidence" value="ECO:0007669"/>
    <property type="project" value="Ensembl"/>
</dbReference>
<dbReference type="GO" id="GO:0048666">
    <property type="term" value="P:neuron development"/>
    <property type="evidence" value="ECO:0007669"/>
    <property type="project" value="Ensembl"/>
</dbReference>
<dbReference type="GO" id="GO:0008104">
    <property type="term" value="P:protein localization"/>
    <property type="evidence" value="ECO:0007669"/>
    <property type="project" value="Ensembl"/>
</dbReference>
<dbReference type="GO" id="GO:0006890">
    <property type="term" value="P:retrograde vesicle-mediated transport, Golgi to endoplasmic reticulum"/>
    <property type="evidence" value="ECO:0000314"/>
    <property type="project" value="UniProtKB"/>
</dbReference>
<dbReference type="GO" id="GO:0021522">
    <property type="term" value="P:spinal cord motor neuron differentiation"/>
    <property type="evidence" value="ECO:0007669"/>
    <property type="project" value="Ensembl"/>
</dbReference>
<dbReference type="CDD" id="cd14011">
    <property type="entry name" value="PK_SCY1_like"/>
    <property type="match status" value="1"/>
</dbReference>
<dbReference type="FunFam" id="1.25.10.10:FF:000108">
    <property type="entry name" value="N-terminal kinase-like protein isoform X1"/>
    <property type="match status" value="1"/>
</dbReference>
<dbReference type="FunFam" id="1.10.510.10:FF:000324">
    <property type="entry name" value="N-terminal kinase-like protein isoform X2"/>
    <property type="match status" value="1"/>
</dbReference>
<dbReference type="FunFam" id="3.30.200.20:FF:000311">
    <property type="entry name" value="N-terminal kinase-like protein isoform X2"/>
    <property type="match status" value="1"/>
</dbReference>
<dbReference type="Gene3D" id="1.25.10.10">
    <property type="entry name" value="Leucine-rich Repeat Variant"/>
    <property type="match status" value="1"/>
</dbReference>
<dbReference type="Gene3D" id="3.30.200.20">
    <property type="entry name" value="Phosphorylase Kinase, domain 1"/>
    <property type="match status" value="1"/>
</dbReference>
<dbReference type="Gene3D" id="1.10.510.10">
    <property type="entry name" value="Transferase(Phosphotransferase) domain 1"/>
    <property type="match status" value="1"/>
</dbReference>
<dbReference type="InterPro" id="IPR011989">
    <property type="entry name" value="ARM-like"/>
</dbReference>
<dbReference type="InterPro" id="IPR016024">
    <property type="entry name" value="ARM-type_fold"/>
</dbReference>
<dbReference type="InterPro" id="IPR051177">
    <property type="entry name" value="CIK-Related_Protein"/>
</dbReference>
<dbReference type="InterPro" id="IPR011009">
    <property type="entry name" value="Kinase-like_dom_sf"/>
</dbReference>
<dbReference type="InterPro" id="IPR000719">
    <property type="entry name" value="Prot_kinase_dom"/>
</dbReference>
<dbReference type="PANTHER" id="PTHR12984:SF3">
    <property type="entry name" value="N-TERMINAL KINASE-LIKE PROTEIN"/>
    <property type="match status" value="1"/>
</dbReference>
<dbReference type="PANTHER" id="PTHR12984">
    <property type="entry name" value="SCY1-RELATED S/T PROTEIN KINASE-LIKE"/>
    <property type="match status" value="1"/>
</dbReference>
<dbReference type="Pfam" id="PF00069">
    <property type="entry name" value="Pkinase"/>
    <property type="match status" value="1"/>
</dbReference>
<dbReference type="SUPFAM" id="SSF48371">
    <property type="entry name" value="ARM repeat"/>
    <property type="match status" value="1"/>
</dbReference>
<dbReference type="SUPFAM" id="SSF56112">
    <property type="entry name" value="Protein kinase-like (PK-like)"/>
    <property type="match status" value="1"/>
</dbReference>
<dbReference type="PROSITE" id="PS50011">
    <property type="entry name" value="PROTEIN_KINASE_DOM"/>
    <property type="match status" value="1"/>
</dbReference>
<reference key="1">
    <citation type="journal article" date="2002" name="Genomics">
        <title>Identification and characterization of the human protein kinase-like gene NTKL: mitosis-specific centrosomal localization of an alternatively spliced isoform.</title>
        <authorList>
            <person name="Kato M."/>
            <person name="Yano K."/>
            <person name="Morotomi-Yano K."/>
            <person name="Saito H."/>
            <person name="Miki Y."/>
        </authorList>
    </citation>
    <scope>NUCLEOTIDE SEQUENCE [MRNA] (ISOFORMS 1; 2 AND 3)</scope>
    <scope>SUBUNIT</scope>
    <scope>TISSUE SPECIFICITY</scope>
    <source>
        <tissue>Testis</tissue>
    </source>
</reference>
<reference key="2">
    <citation type="journal article" date="2004" name="Biochem. Biophys. Res. Commun.">
        <title>Molecular cloning and characterization of a human gene involved in transcriptional regulation of hTERT.</title>
        <authorList>
            <person name="Tang Z."/>
            <person name="Zhao Y."/>
            <person name="Mei F."/>
            <person name="Yang S."/>
            <person name="Li X."/>
            <person name="Lv J."/>
            <person name="Hou L."/>
            <person name="Zhang B."/>
        </authorList>
    </citation>
    <scope>NUCLEOTIDE SEQUENCE [MRNA] (ISOFORM 6)</scope>
    <scope>DNA-BINDING (ISOFORM 6)</scope>
    <scope>SUBCELLULAR LOCATION (ISOFORM 6)</scope>
    <source>
        <tissue>Cervix carcinoma</tissue>
    </source>
</reference>
<reference key="3">
    <citation type="journal article" date="2006" name="Nature">
        <title>Human chromosome 11 DNA sequence and analysis including novel gene identification.</title>
        <authorList>
            <person name="Taylor T.D."/>
            <person name="Noguchi H."/>
            <person name="Totoki Y."/>
            <person name="Toyoda A."/>
            <person name="Kuroki Y."/>
            <person name="Dewar K."/>
            <person name="Lloyd C."/>
            <person name="Itoh T."/>
            <person name="Takeda T."/>
            <person name="Kim D.-W."/>
            <person name="She X."/>
            <person name="Barlow K.F."/>
            <person name="Bloom T."/>
            <person name="Bruford E."/>
            <person name="Chang J.L."/>
            <person name="Cuomo C.A."/>
            <person name="Eichler E."/>
            <person name="FitzGerald M.G."/>
            <person name="Jaffe D.B."/>
            <person name="LaButti K."/>
            <person name="Nicol R."/>
            <person name="Park H.-S."/>
            <person name="Seaman C."/>
            <person name="Sougnez C."/>
            <person name="Yang X."/>
            <person name="Zimmer A.R."/>
            <person name="Zody M.C."/>
            <person name="Birren B.W."/>
            <person name="Nusbaum C."/>
            <person name="Fujiyama A."/>
            <person name="Hattori M."/>
            <person name="Rogers J."/>
            <person name="Lander E.S."/>
            <person name="Sakaki Y."/>
        </authorList>
    </citation>
    <scope>NUCLEOTIDE SEQUENCE [LARGE SCALE GENOMIC DNA]</scope>
</reference>
<reference key="4">
    <citation type="submission" date="2005-07" db="EMBL/GenBank/DDBJ databases">
        <authorList>
            <person name="Mural R.J."/>
            <person name="Istrail S."/>
            <person name="Sutton G.G."/>
            <person name="Florea L."/>
            <person name="Halpern A.L."/>
            <person name="Mobarry C.M."/>
            <person name="Lippert R."/>
            <person name="Walenz B."/>
            <person name="Shatkay H."/>
            <person name="Dew I."/>
            <person name="Miller J.R."/>
            <person name="Flanigan M.J."/>
            <person name="Edwards N.J."/>
            <person name="Bolanos R."/>
            <person name="Fasulo D."/>
            <person name="Halldorsson B.V."/>
            <person name="Hannenhalli S."/>
            <person name="Turner R."/>
            <person name="Yooseph S."/>
            <person name="Lu F."/>
            <person name="Nusskern D.R."/>
            <person name="Shue B.C."/>
            <person name="Zheng X.H."/>
            <person name="Zhong F."/>
            <person name="Delcher A.L."/>
            <person name="Huson D.H."/>
            <person name="Kravitz S.A."/>
            <person name="Mouchard L."/>
            <person name="Reinert K."/>
            <person name="Remington K.A."/>
            <person name="Clark A.G."/>
            <person name="Waterman M.S."/>
            <person name="Eichler E.E."/>
            <person name="Adams M.D."/>
            <person name="Hunkapiller M.W."/>
            <person name="Myers E.W."/>
            <person name="Venter J.C."/>
        </authorList>
    </citation>
    <scope>NUCLEOTIDE SEQUENCE [LARGE SCALE GENOMIC DNA]</scope>
</reference>
<reference key="5">
    <citation type="journal article" date="2004" name="Genome Res.">
        <title>The status, quality, and expansion of the NIH full-length cDNA project: the Mammalian Gene Collection (MGC).</title>
        <authorList>
            <consortium name="The MGC Project Team"/>
        </authorList>
    </citation>
    <scope>NUCLEOTIDE SEQUENCE [LARGE SCALE MRNA] (ISOFORM 1)</scope>
    <scope>NUCLEOTIDE SEQUENCE [LARGE SCALE MRNA] OF 310-808 (ISOFORM 4)</scope>
    <source>
        <tissue>Eye</tissue>
        <tissue>Teratocarcinoma</tissue>
    </source>
</reference>
<reference key="6">
    <citation type="journal article" date="2000" name="Genomics">
        <title>Construction of a 350-kb sequence-ready 11q13 cosmid contig encompassing the markers D11S4933 and D11S546: mapping of 11 genes and 3 tumor-associated translocation breakpoints.</title>
        <authorList>
            <person name="van Asseldonk M."/>
            <person name="Schepens M."/>
            <person name="de Bruijn D."/>
            <person name="Janssen B."/>
            <person name="Merkx G."/>
            <person name="Geurts van Kessel A."/>
        </authorList>
    </citation>
    <scope>NUCLEOTIDE SEQUENCE [GENOMIC DNA] OF 1-283</scope>
</reference>
<reference key="7">
    <citation type="submission" date="2000-01" db="EMBL/GenBank/DDBJ databases">
        <authorList>
            <person name="Xiao H."/>
            <person name="Song H."/>
            <person name="Gao G."/>
            <person name="Ren S."/>
            <person name="Chen Z."/>
            <person name="Han Z."/>
        </authorList>
    </citation>
    <scope>NUCLEOTIDE SEQUENCE [LARGE SCALE MRNA] OF 288-808 (ISOFORM 5)</scope>
    <source>
        <tissue>Hypothalamus</tissue>
    </source>
</reference>
<reference key="8">
    <citation type="journal article" date="2005" name="Biochem. Biophys. Res. Commun.">
        <title>Transcriptional upregulation of DNA polymerase beta by TEIF.</title>
        <authorList>
            <person name="Zhao Y."/>
            <person name="Zheng J."/>
            <person name="Ling Y."/>
            <person name="Hou L."/>
            <person name="Zhang B."/>
        </authorList>
    </citation>
    <scope>FUNCTION (ISOFORM 6)</scope>
    <scope>DNA-BINDING (ISOFORM 6)</scope>
</reference>
<reference key="9">
    <citation type="journal article" date="2006" name="Cell">
        <title>Global, in vivo, and site-specific phosphorylation dynamics in signaling networks.</title>
        <authorList>
            <person name="Olsen J.V."/>
            <person name="Blagoev B."/>
            <person name="Gnad F."/>
            <person name="Macek B."/>
            <person name="Kumar C."/>
            <person name="Mortensen P."/>
            <person name="Mann M."/>
        </authorList>
    </citation>
    <scope>PHOSPHORYLATION [LARGE SCALE ANALYSIS] AT SER-754</scope>
    <scope>IDENTIFICATION BY MASS SPECTROMETRY [LARGE SCALE ANALYSIS]</scope>
    <source>
        <tissue>Cervix carcinoma</tissue>
    </source>
</reference>
<reference key="10">
    <citation type="journal article" date="2006" name="PLoS Biol.">
        <title>Role of the AP2 beta-appendage hub in recruiting partners for clathrin-coated vesicle assembly.</title>
        <authorList>
            <person name="Schmid E.M."/>
            <person name="Ford M.G.J."/>
            <person name="Burtey A."/>
            <person name="Praefcke G.J.K."/>
            <person name="Peak-Chew S.-Y."/>
            <person name="Mills I.G."/>
            <person name="Benmerah A."/>
            <person name="McMahon H.T."/>
        </authorList>
    </citation>
    <scope>INTERACTION WITH AP2B1</scope>
</reference>
<reference key="11">
    <citation type="journal article" date="2008" name="J. Biol. Chem.">
        <title>Scyl1, mutated in a recessive form of spinocerebellar neurodegeneration, regulates COPI-mediated retrograde traffic.</title>
        <authorList>
            <person name="Burman J.L."/>
            <person name="Bourbonniere L."/>
            <person name="Philie J."/>
            <person name="Stroh T."/>
            <person name="Dejgaard S.Y."/>
            <person name="Presley J.F."/>
            <person name="McPherson P.S."/>
        </authorList>
    </citation>
    <scope>FUNCTION</scope>
    <scope>SUBCELLULAR LOCATION</scope>
</reference>
<reference key="12">
    <citation type="journal article" date="2010" name="Sci. Signal.">
        <title>Quantitative phosphoproteomics reveals widespread full phosphorylation site occupancy during mitosis.</title>
        <authorList>
            <person name="Olsen J.V."/>
            <person name="Vermeulen M."/>
            <person name="Santamaria A."/>
            <person name="Kumar C."/>
            <person name="Miller M.L."/>
            <person name="Jensen L.J."/>
            <person name="Gnad F."/>
            <person name="Cox J."/>
            <person name="Jensen T.S."/>
            <person name="Nigg E.A."/>
            <person name="Brunak S."/>
            <person name="Mann M."/>
        </authorList>
    </citation>
    <scope>PHOSPHORYLATION [LARGE SCALE ANALYSIS] AT SER-754</scope>
    <scope>IDENTIFICATION BY MASS SPECTROMETRY [LARGE SCALE ANALYSIS]</scope>
    <source>
        <tissue>Cervix carcinoma</tissue>
    </source>
</reference>
<reference key="13">
    <citation type="journal article" date="2011" name="BMC Syst. Biol.">
        <title>Initial characterization of the human central proteome.</title>
        <authorList>
            <person name="Burkard T.R."/>
            <person name="Planyavsky M."/>
            <person name="Kaupe I."/>
            <person name="Breitwieser F.P."/>
            <person name="Buerckstuemmer T."/>
            <person name="Bennett K.L."/>
            <person name="Superti-Furga G."/>
            <person name="Colinge J."/>
        </authorList>
    </citation>
    <scope>IDENTIFICATION BY MASS SPECTROMETRY [LARGE SCALE ANALYSIS]</scope>
</reference>
<reference key="14">
    <citation type="journal article" date="2014" name="J. Proteomics">
        <title>An enzyme assisted RP-RPLC approach for in-depth analysis of human liver phosphoproteome.</title>
        <authorList>
            <person name="Bian Y."/>
            <person name="Song C."/>
            <person name="Cheng K."/>
            <person name="Dong M."/>
            <person name="Wang F."/>
            <person name="Huang J."/>
            <person name="Sun D."/>
            <person name="Wang L."/>
            <person name="Ye M."/>
            <person name="Zou H."/>
        </authorList>
    </citation>
    <scope>IDENTIFICATION BY MASS SPECTROMETRY [LARGE SCALE ANALYSIS]</scope>
    <source>
        <tissue>Liver</tissue>
    </source>
</reference>
<reference key="15">
    <citation type="journal article" date="2015" name="Am. J. Hum. Genet.">
        <title>Disruptive SCYL1 mutations underlie a syndrome characterized by recurrent episodes of liver failure, peripheral neuropathy, cerebellar atrophy, and ataxia.</title>
        <authorList>
            <person name="Schmidt W.M."/>
            <person name="Rutledge S.L."/>
            <person name="Schuele R."/>
            <person name="Mayerhofer B."/>
            <person name="Zuechner S."/>
            <person name="Boltshauser E."/>
            <person name="Bittner R.E."/>
        </authorList>
    </citation>
    <scope>INVOLVEMENT IN SCAR21</scope>
    <scope>FUNCTION</scope>
</reference>
<reference key="16">
    <citation type="journal article" date="2007" name="Nature">
        <title>Patterns of somatic mutation in human cancer genomes.</title>
        <authorList>
            <person name="Greenman C."/>
            <person name="Stephens P."/>
            <person name="Smith R."/>
            <person name="Dalgliesh G.L."/>
            <person name="Hunter C."/>
            <person name="Bignell G."/>
            <person name="Davies H."/>
            <person name="Teague J."/>
            <person name="Butler A."/>
            <person name="Stevens C."/>
            <person name="Edkins S."/>
            <person name="O'Meara S."/>
            <person name="Vastrik I."/>
            <person name="Schmidt E.E."/>
            <person name="Avis T."/>
            <person name="Barthorpe S."/>
            <person name="Bhamra G."/>
            <person name="Buck G."/>
            <person name="Choudhury B."/>
            <person name="Clements J."/>
            <person name="Cole J."/>
            <person name="Dicks E."/>
            <person name="Forbes S."/>
            <person name="Gray K."/>
            <person name="Halliday K."/>
            <person name="Harrison R."/>
            <person name="Hills K."/>
            <person name="Hinton J."/>
            <person name="Jenkinson A."/>
            <person name="Jones D."/>
            <person name="Menzies A."/>
            <person name="Mironenko T."/>
            <person name="Perry J."/>
            <person name="Raine K."/>
            <person name="Richardson D."/>
            <person name="Shepherd R."/>
            <person name="Small A."/>
            <person name="Tofts C."/>
            <person name="Varian J."/>
            <person name="Webb T."/>
            <person name="West S."/>
            <person name="Widaa S."/>
            <person name="Yates A."/>
            <person name="Cahill D.P."/>
            <person name="Louis D.N."/>
            <person name="Goldstraw P."/>
            <person name="Nicholson A.G."/>
            <person name="Brasseur F."/>
            <person name="Looijenga L."/>
            <person name="Weber B.L."/>
            <person name="Chiew Y.-E."/>
            <person name="DeFazio A."/>
            <person name="Greaves M.F."/>
            <person name="Green A.R."/>
            <person name="Campbell P."/>
            <person name="Birney E."/>
            <person name="Easton D.F."/>
            <person name="Chenevix-Trench G."/>
            <person name="Tan M.-H."/>
            <person name="Khoo S.K."/>
            <person name="Teh B.T."/>
            <person name="Yuen S.T."/>
            <person name="Leung S.Y."/>
            <person name="Wooster R."/>
            <person name="Futreal P.A."/>
            <person name="Stratton M.R."/>
        </authorList>
    </citation>
    <scope>VARIANTS [LARGE SCALE ANALYSIS] LEU-479; TYR-495; HIS-663 AND SER-755</scope>
</reference>
<gene>
    <name type="primary">SCYL1</name>
    <name type="synonym">CVAK90</name>
    <name type="synonym">GKLP</name>
    <name type="synonym">NTKL</name>
    <name type="synonym">TAPK</name>
    <name type="synonym">TEIF</name>
    <name type="synonym">TRAP</name>
    <name type="ORF">HT019</name>
</gene>
<accession>Q96KG9</accession>
<accession>A6NJF1</accession>
<accession>Q96G50</accession>
<accession>Q96KG8</accession>
<accession>Q96KH1</accession>
<accession>Q9HAW5</accession>
<accession>Q9HBL3</accession>
<accession>Q9NR53</accession>
<name>SCYL1_HUMAN</name>
<evidence type="ECO:0000250" key="1"/>
<evidence type="ECO:0000255" key="2"/>
<evidence type="ECO:0000255" key="3">
    <source>
        <dbReference type="PROSITE-ProRule" id="PRU00159"/>
    </source>
</evidence>
<evidence type="ECO:0000256" key="4">
    <source>
        <dbReference type="SAM" id="MobiDB-lite"/>
    </source>
</evidence>
<evidence type="ECO:0000269" key="5">
    <source>
    </source>
</evidence>
<evidence type="ECO:0000269" key="6">
    <source>
    </source>
</evidence>
<evidence type="ECO:0000269" key="7">
    <source>
    </source>
</evidence>
<evidence type="ECO:0000269" key="8">
    <source>
    </source>
</evidence>
<evidence type="ECO:0000269" key="9">
    <source>
    </source>
</evidence>
<evidence type="ECO:0000269" key="10">
    <source>
    </source>
</evidence>
<evidence type="ECO:0000269" key="11">
    <source>
    </source>
</evidence>
<evidence type="ECO:0000303" key="12">
    <source>
    </source>
</evidence>
<evidence type="ECO:0000303" key="13">
    <source>
    </source>
</evidence>
<evidence type="ECO:0000303" key="14">
    <source>
    </source>
</evidence>
<evidence type="ECO:0000303" key="15">
    <source ref="7"/>
</evidence>
<evidence type="ECO:0000305" key="16"/>
<evidence type="ECO:0007744" key="17">
    <source>
    </source>
</evidence>
<evidence type="ECO:0007744" key="18">
    <source>
    </source>
</evidence>
<proteinExistence type="evidence at protein level"/>
<organism>
    <name type="scientific">Homo sapiens</name>
    <name type="common">Human</name>
    <dbReference type="NCBI Taxonomy" id="9606"/>
    <lineage>
        <taxon>Eukaryota</taxon>
        <taxon>Metazoa</taxon>
        <taxon>Chordata</taxon>
        <taxon>Craniata</taxon>
        <taxon>Vertebrata</taxon>
        <taxon>Euteleostomi</taxon>
        <taxon>Mammalia</taxon>
        <taxon>Eutheria</taxon>
        <taxon>Euarchontoglires</taxon>
        <taxon>Primates</taxon>
        <taxon>Haplorrhini</taxon>
        <taxon>Catarrhini</taxon>
        <taxon>Hominidae</taxon>
        <taxon>Homo</taxon>
    </lineage>
</organism>
<protein>
    <recommendedName>
        <fullName>N-terminal kinase-like protein</fullName>
    </recommendedName>
    <alternativeName>
        <fullName>Coated vesicle-associated kinase of 90 kDa</fullName>
    </alternativeName>
    <alternativeName>
        <fullName>SCY1-like protein 1</fullName>
    </alternativeName>
    <alternativeName>
        <fullName>Telomerase regulation-associated protein</fullName>
    </alternativeName>
    <alternativeName>
        <fullName>Telomerase transcriptional element-interacting factor</fullName>
    </alternativeName>
    <alternativeName>
        <fullName>Teratoma-associated tyrosine kinase</fullName>
    </alternativeName>
</protein>